<gene>
    <name evidence="1" type="primary">glk</name>
    <name type="ordered locus">EFER_0780</name>
</gene>
<name>GLK_ESCF3</name>
<dbReference type="EC" id="2.7.1.2" evidence="1"/>
<dbReference type="EMBL" id="CU928158">
    <property type="protein sequence ID" value="CAQ88316.1"/>
    <property type="molecule type" value="Genomic_DNA"/>
</dbReference>
<dbReference type="RefSeq" id="WP_000170368.1">
    <property type="nucleotide sequence ID" value="NC_011740.1"/>
</dbReference>
<dbReference type="SMR" id="B7LL88"/>
<dbReference type="GeneID" id="75058160"/>
<dbReference type="KEGG" id="efe:EFER_0780"/>
<dbReference type="HOGENOM" id="CLU_042582_1_0_6"/>
<dbReference type="OrthoDB" id="9800595at2"/>
<dbReference type="Proteomes" id="UP000000745">
    <property type="component" value="Chromosome"/>
</dbReference>
<dbReference type="GO" id="GO:0005829">
    <property type="term" value="C:cytosol"/>
    <property type="evidence" value="ECO:0007669"/>
    <property type="project" value="TreeGrafter"/>
</dbReference>
<dbReference type="GO" id="GO:0005524">
    <property type="term" value="F:ATP binding"/>
    <property type="evidence" value="ECO:0007669"/>
    <property type="project" value="UniProtKB-UniRule"/>
</dbReference>
<dbReference type="GO" id="GO:0005536">
    <property type="term" value="F:D-glucose binding"/>
    <property type="evidence" value="ECO:0007669"/>
    <property type="project" value="InterPro"/>
</dbReference>
<dbReference type="GO" id="GO:0004340">
    <property type="term" value="F:glucokinase activity"/>
    <property type="evidence" value="ECO:0007669"/>
    <property type="project" value="UniProtKB-UniRule"/>
</dbReference>
<dbReference type="GO" id="GO:0006096">
    <property type="term" value="P:glycolytic process"/>
    <property type="evidence" value="ECO:0007669"/>
    <property type="project" value="UniProtKB-UniRule"/>
</dbReference>
<dbReference type="CDD" id="cd24008">
    <property type="entry name" value="ASKHA_NBD_GLK"/>
    <property type="match status" value="1"/>
</dbReference>
<dbReference type="FunFam" id="3.30.420.40:FF:000045">
    <property type="entry name" value="Glucokinase"/>
    <property type="match status" value="1"/>
</dbReference>
<dbReference type="FunFam" id="3.40.367.20:FF:000002">
    <property type="entry name" value="Glucokinase"/>
    <property type="match status" value="1"/>
</dbReference>
<dbReference type="Gene3D" id="3.30.420.40">
    <property type="match status" value="1"/>
</dbReference>
<dbReference type="Gene3D" id="3.40.367.20">
    <property type="match status" value="1"/>
</dbReference>
<dbReference type="HAMAP" id="MF_00524">
    <property type="entry name" value="Glucokinase"/>
    <property type="match status" value="1"/>
</dbReference>
<dbReference type="InterPro" id="IPR043129">
    <property type="entry name" value="ATPase_NBD"/>
</dbReference>
<dbReference type="InterPro" id="IPR050201">
    <property type="entry name" value="Bacterial_glucokinase"/>
</dbReference>
<dbReference type="InterPro" id="IPR003836">
    <property type="entry name" value="Glucokinase"/>
</dbReference>
<dbReference type="NCBIfam" id="TIGR00749">
    <property type="entry name" value="glk"/>
    <property type="match status" value="1"/>
</dbReference>
<dbReference type="NCBIfam" id="NF001414">
    <property type="entry name" value="PRK00292.1-1"/>
    <property type="match status" value="1"/>
</dbReference>
<dbReference type="NCBIfam" id="NF001416">
    <property type="entry name" value="PRK00292.1-3"/>
    <property type="match status" value="1"/>
</dbReference>
<dbReference type="NCBIfam" id="NF009073">
    <property type="entry name" value="PRK12408.1"/>
    <property type="match status" value="1"/>
</dbReference>
<dbReference type="PANTHER" id="PTHR47690">
    <property type="entry name" value="GLUCOKINASE"/>
    <property type="match status" value="1"/>
</dbReference>
<dbReference type="PANTHER" id="PTHR47690:SF1">
    <property type="entry name" value="GLUCOKINASE"/>
    <property type="match status" value="1"/>
</dbReference>
<dbReference type="Pfam" id="PF02685">
    <property type="entry name" value="Glucokinase"/>
    <property type="match status" value="1"/>
</dbReference>
<dbReference type="SUPFAM" id="SSF53067">
    <property type="entry name" value="Actin-like ATPase domain"/>
    <property type="match status" value="1"/>
</dbReference>
<comment type="catalytic activity">
    <reaction evidence="1">
        <text>D-glucose + ATP = D-glucose 6-phosphate + ADP + H(+)</text>
        <dbReference type="Rhea" id="RHEA:17825"/>
        <dbReference type="ChEBI" id="CHEBI:4167"/>
        <dbReference type="ChEBI" id="CHEBI:15378"/>
        <dbReference type="ChEBI" id="CHEBI:30616"/>
        <dbReference type="ChEBI" id="CHEBI:61548"/>
        <dbReference type="ChEBI" id="CHEBI:456216"/>
        <dbReference type="EC" id="2.7.1.2"/>
    </reaction>
</comment>
<comment type="subcellular location">
    <subcellularLocation>
        <location evidence="1">Cytoplasm</location>
    </subcellularLocation>
</comment>
<comment type="similarity">
    <text evidence="1">Belongs to the bacterial glucokinase family.</text>
</comment>
<evidence type="ECO:0000255" key="1">
    <source>
        <dbReference type="HAMAP-Rule" id="MF_00524"/>
    </source>
</evidence>
<protein>
    <recommendedName>
        <fullName evidence="1">Glucokinase</fullName>
        <ecNumber evidence="1">2.7.1.2</ecNumber>
    </recommendedName>
    <alternativeName>
        <fullName evidence="1">Glucose kinase</fullName>
    </alternativeName>
</protein>
<reference key="1">
    <citation type="journal article" date="2009" name="PLoS Genet.">
        <title>Organised genome dynamics in the Escherichia coli species results in highly diverse adaptive paths.</title>
        <authorList>
            <person name="Touchon M."/>
            <person name="Hoede C."/>
            <person name="Tenaillon O."/>
            <person name="Barbe V."/>
            <person name="Baeriswyl S."/>
            <person name="Bidet P."/>
            <person name="Bingen E."/>
            <person name="Bonacorsi S."/>
            <person name="Bouchier C."/>
            <person name="Bouvet O."/>
            <person name="Calteau A."/>
            <person name="Chiapello H."/>
            <person name="Clermont O."/>
            <person name="Cruveiller S."/>
            <person name="Danchin A."/>
            <person name="Diard M."/>
            <person name="Dossat C."/>
            <person name="Karoui M.E."/>
            <person name="Frapy E."/>
            <person name="Garry L."/>
            <person name="Ghigo J.M."/>
            <person name="Gilles A.M."/>
            <person name="Johnson J."/>
            <person name="Le Bouguenec C."/>
            <person name="Lescat M."/>
            <person name="Mangenot S."/>
            <person name="Martinez-Jehanne V."/>
            <person name="Matic I."/>
            <person name="Nassif X."/>
            <person name="Oztas S."/>
            <person name="Petit M.A."/>
            <person name="Pichon C."/>
            <person name="Rouy Z."/>
            <person name="Ruf C.S."/>
            <person name="Schneider D."/>
            <person name="Tourret J."/>
            <person name="Vacherie B."/>
            <person name="Vallenet D."/>
            <person name="Medigue C."/>
            <person name="Rocha E.P.C."/>
            <person name="Denamur E."/>
        </authorList>
    </citation>
    <scope>NUCLEOTIDE SEQUENCE [LARGE SCALE GENOMIC DNA]</scope>
    <source>
        <strain>ATCC 35469 / DSM 13698 / BCRC 15582 / CCUG 18766 / IAM 14443 / JCM 21226 / LMG 7866 / NBRC 102419 / NCTC 12128 / CDC 0568-73</strain>
    </source>
</reference>
<organism>
    <name type="scientific">Escherichia fergusonii (strain ATCC 35469 / DSM 13698 / CCUG 18766 / IAM 14443 / JCM 21226 / LMG 7866 / NBRC 102419 / NCTC 12128 / CDC 0568-73)</name>
    <dbReference type="NCBI Taxonomy" id="585054"/>
    <lineage>
        <taxon>Bacteria</taxon>
        <taxon>Pseudomonadati</taxon>
        <taxon>Pseudomonadota</taxon>
        <taxon>Gammaproteobacteria</taxon>
        <taxon>Enterobacterales</taxon>
        <taxon>Enterobacteriaceae</taxon>
        <taxon>Escherichia</taxon>
    </lineage>
</organism>
<accession>B7LL88</accession>
<sequence>MTKYALVGDVGGTNARLALCDIASGEISQAKTYSGLDYPSLEAVIRVYLEEHNVEVQDGCIAIACPITGDWVAMTNHTWAFSIAEMKKNLGFSHLEIINDFTAVSMAIPMLKKEHLIQFGGAEPVEGKPIAVYGAGTGLGVAHLVHVDKRWVSLPGEGGHVDFAPNSEEEGIILEILRAEIGHVSAERVLSGPGLVNLYRAIVKADNRLPENLKPKDITERALADSCTDCRRALSLFCVIMGRFGGNLALTLGTFGGVYIAGGIVPRFLEFFKASGFRAAFEDKGRFKEYVHDIPVYLIVHDNPGLLGSGAHLRQTLGHIL</sequence>
<proteinExistence type="inferred from homology"/>
<keyword id="KW-0067">ATP-binding</keyword>
<keyword id="KW-0963">Cytoplasm</keyword>
<keyword id="KW-0324">Glycolysis</keyword>
<keyword id="KW-0418">Kinase</keyword>
<keyword id="KW-0547">Nucleotide-binding</keyword>
<keyword id="KW-0808">Transferase</keyword>
<feature type="chain" id="PRO_1000127708" description="Glucokinase">
    <location>
        <begin position="1"/>
        <end position="321"/>
    </location>
</feature>
<feature type="binding site" evidence="1">
    <location>
        <begin position="8"/>
        <end position="13"/>
    </location>
    <ligand>
        <name>ATP</name>
        <dbReference type="ChEBI" id="CHEBI:30616"/>
    </ligand>
</feature>